<sequence>MKSIAVYPGSFDPFTNGHLDIIRRAHPLFEEIIIAVAINSKKTSLFSPEERVEMIGKVFHGWDKIKIDTFEGLTVDYCKEKNSRVILRGLRAVTDFDYEYAISLMNKKLAPEIETYFLMADNEYSFVSSTIVKEVARHGRAVSNQVPDVVGEALVKKFSV</sequence>
<dbReference type="EC" id="2.7.7.3" evidence="1"/>
<dbReference type="EMBL" id="CP000786">
    <property type="protein sequence ID" value="ABZ96233.1"/>
    <property type="molecule type" value="Genomic_DNA"/>
</dbReference>
<dbReference type="RefSeq" id="WP_012387123.1">
    <property type="nucleotide sequence ID" value="NC_010602.1"/>
</dbReference>
<dbReference type="SMR" id="B0SJR1"/>
<dbReference type="STRING" id="456481.LEPBI_I0086"/>
<dbReference type="KEGG" id="lbi:LEPBI_I0086"/>
<dbReference type="HOGENOM" id="CLU_100149_0_1_12"/>
<dbReference type="OrthoDB" id="9806661at2"/>
<dbReference type="BioCyc" id="LBIF456481:LEPBI_RS00435-MONOMER"/>
<dbReference type="UniPathway" id="UPA00241">
    <property type="reaction ID" value="UER00355"/>
</dbReference>
<dbReference type="Proteomes" id="UP000001847">
    <property type="component" value="Chromosome I"/>
</dbReference>
<dbReference type="GO" id="GO:0005737">
    <property type="term" value="C:cytoplasm"/>
    <property type="evidence" value="ECO:0007669"/>
    <property type="project" value="UniProtKB-SubCell"/>
</dbReference>
<dbReference type="GO" id="GO:0005524">
    <property type="term" value="F:ATP binding"/>
    <property type="evidence" value="ECO:0007669"/>
    <property type="project" value="UniProtKB-KW"/>
</dbReference>
<dbReference type="GO" id="GO:0004595">
    <property type="term" value="F:pantetheine-phosphate adenylyltransferase activity"/>
    <property type="evidence" value="ECO:0007669"/>
    <property type="project" value="UniProtKB-UniRule"/>
</dbReference>
<dbReference type="GO" id="GO:0015937">
    <property type="term" value="P:coenzyme A biosynthetic process"/>
    <property type="evidence" value="ECO:0007669"/>
    <property type="project" value="UniProtKB-UniRule"/>
</dbReference>
<dbReference type="CDD" id="cd02163">
    <property type="entry name" value="PPAT"/>
    <property type="match status" value="1"/>
</dbReference>
<dbReference type="Gene3D" id="3.40.50.620">
    <property type="entry name" value="HUPs"/>
    <property type="match status" value="1"/>
</dbReference>
<dbReference type="HAMAP" id="MF_00151">
    <property type="entry name" value="PPAT_bact"/>
    <property type="match status" value="1"/>
</dbReference>
<dbReference type="InterPro" id="IPR004821">
    <property type="entry name" value="Cyt_trans-like"/>
</dbReference>
<dbReference type="InterPro" id="IPR001980">
    <property type="entry name" value="PPAT"/>
</dbReference>
<dbReference type="InterPro" id="IPR014729">
    <property type="entry name" value="Rossmann-like_a/b/a_fold"/>
</dbReference>
<dbReference type="NCBIfam" id="TIGR01510">
    <property type="entry name" value="coaD_prev_kdtB"/>
    <property type="match status" value="1"/>
</dbReference>
<dbReference type="NCBIfam" id="TIGR00125">
    <property type="entry name" value="cyt_tran_rel"/>
    <property type="match status" value="1"/>
</dbReference>
<dbReference type="PANTHER" id="PTHR21342">
    <property type="entry name" value="PHOSPHOPANTETHEINE ADENYLYLTRANSFERASE"/>
    <property type="match status" value="1"/>
</dbReference>
<dbReference type="PANTHER" id="PTHR21342:SF1">
    <property type="entry name" value="PHOSPHOPANTETHEINE ADENYLYLTRANSFERASE"/>
    <property type="match status" value="1"/>
</dbReference>
<dbReference type="Pfam" id="PF01467">
    <property type="entry name" value="CTP_transf_like"/>
    <property type="match status" value="1"/>
</dbReference>
<dbReference type="PRINTS" id="PR01020">
    <property type="entry name" value="LPSBIOSNTHSS"/>
</dbReference>
<dbReference type="SUPFAM" id="SSF52374">
    <property type="entry name" value="Nucleotidylyl transferase"/>
    <property type="match status" value="1"/>
</dbReference>
<protein>
    <recommendedName>
        <fullName evidence="1">Phosphopantetheine adenylyltransferase</fullName>
        <ecNumber evidence="1">2.7.7.3</ecNumber>
    </recommendedName>
    <alternativeName>
        <fullName evidence="1">Dephospho-CoA pyrophosphorylase</fullName>
    </alternativeName>
    <alternativeName>
        <fullName evidence="1">Pantetheine-phosphate adenylyltransferase</fullName>
        <shortName evidence="1">PPAT</shortName>
    </alternativeName>
</protein>
<gene>
    <name evidence="1" type="primary">coaD</name>
    <name type="ordered locus">LEPBI_I0086</name>
</gene>
<name>COAD_LEPBP</name>
<feature type="chain" id="PRO_1000096810" description="Phosphopantetheine adenylyltransferase">
    <location>
        <begin position="1"/>
        <end position="160"/>
    </location>
</feature>
<feature type="binding site" evidence="1">
    <location>
        <begin position="10"/>
        <end position="11"/>
    </location>
    <ligand>
        <name>ATP</name>
        <dbReference type="ChEBI" id="CHEBI:30616"/>
    </ligand>
</feature>
<feature type="binding site" evidence="1">
    <location>
        <position position="10"/>
    </location>
    <ligand>
        <name>substrate</name>
    </ligand>
</feature>
<feature type="binding site" evidence="1">
    <location>
        <position position="18"/>
    </location>
    <ligand>
        <name>ATP</name>
        <dbReference type="ChEBI" id="CHEBI:30616"/>
    </ligand>
</feature>
<feature type="binding site" evidence="1">
    <location>
        <position position="42"/>
    </location>
    <ligand>
        <name>substrate</name>
    </ligand>
</feature>
<feature type="binding site" evidence="1">
    <location>
        <position position="74"/>
    </location>
    <ligand>
        <name>substrate</name>
    </ligand>
</feature>
<feature type="binding site" evidence="1">
    <location>
        <position position="88"/>
    </location>
    <ligand>
        <name>substrate</name>
    </ligand>
</feature>
<feature type="binding site" evidence="1">
    <location>
        <begin position="89"/>
        <end position="91"/>
    </location>
    <ligand>
        <name>ATP</name>
        <dbReference type="ChEBI" id="CHEBI:30616"/>
    </ligand>
</feature>
<feature type="binding site" evidence="1">
    <location>
        <position position="99"/>
    </location>
    <ligand>
        <name>ATP</name>
        <dbReference type="ChEBI" id="CHEBI:30616"/>
    </ligand>
</feature>
<feature type="binding site" evidence="1">
    <location>
        <begin position="124"/>
        <end position="130"/>
    </location>
    <ligand>
        <name>ATP</name>
        <dbReference type="ChEBI" id="CHEBI:30616"/>
    </ligand>
</feature>
<feature type="site" description="Transition state stabilizer" evidence="1">
    <location>
        <position position="18"/>
    </location>
</feature>
<proteinExistence type="inferred from homology"/>
<organism>
    <name type="scientific">Leptospira biflexa serovar Patoc (strain Patoc 1 / ATCC 23582 / Paris)</name>
    <dbReference type="NCBI Taxonomy" id="456481"/>
    <lineage>
        <taxon>Bacteria</taxon>
        <taxon>Pseudomonadati</taxon>
        <taxon>Spirochaetota</taxon>
        <taxon>Spirochaetia</taxon>
        <taxon>Leptospirales</taxon>
        <taxon>Leptospiraceae</taxon>
        <taxon>Leptospira</taxon>
    </lineage>
</organism>
<reference key="1">
    <citation type="journal article" date="2008" name="PLoS ONE">
        <title>Genome sequence of the saprophyte Leptospira biflexa provides insights into the evolution of Leptospira and the pathogenesis of leptospirosis.</title>
        <authorList>
            <person name="Picardeau M."/>
            <person name="Bulach D.M."/>
            <person name="Bouchier C."/>
            <person name="Zuerner R.L."/>
            <person name="Zidane N."/>
            <person name="Wilson P.J."/>
            <person name="Creno S."/>
            <person name="Kuczek E.S."/>
            <person name="Bommezzadri S."/>
            <person name="Davis J.C."/>
            <person name="McGrath A."/>
            <person name="Johnson M.J."/>
            <person name="Boursaux-Eude C."/>
            <person name="Seemann T."/>
            <person name="Rouy Z."/>
            <person name="Coppel R.L."/>
            <person name="Rood J.I."/>
            <person name="Lajus A."/>
            <person name="Davies J.K."/>
            <person name="Medigue C."/>
            <person name="Adler B."/>
        </authorList>
    </citation>
    <scope>NUCLEOTIDE SEQUENCE [LARGE SCALE GENOMIC DNA]</scope>
    <source>
        <strain>Patoc 1 / ATCC 23582 / Paris</strain>
    </source>
</reference>
<accession>B0SJR1</accession>
<keyword id="KW-0067">ATP-binding</keyword>
<keyword id="KW-0173">Coenzyme A biosynthesis</keyword>
<keyword id="KW-0963">Cytoplasm</keyword>
<keyword id="KW-0460">Magnesium</keyword>
<keyword id="KW-0547">Nucleotide-binding</keyword>
<keyword id="KW-0548">Nucleotidyltransferase</keyword>
<keyword id="KW-1185">Reference proteome</keyword>
<keyword id="KW-0808">Transferase</keyword>
<comment type="function">
    <text evidence="1">Reversibly transfers an adenylyl group from ATP to 4'-phosphopantetheine, yielding dephospho-CoA (dPCoA) and pyrophosphate.</text>
</comment>
<comment type="catalytic activity">
    <reaction evidence="1">
        <text>(R)-4'-phosphopantetheine + ATP + H(+) = 3'-dephospho-CoA + diphosphate</text>
        <dbReference type="Rhea" id="RHEA:19801"/>
        <dbReference type="ChEBI" id="CHEBI:15378"/>
        <dbReference type="ChEBI" id="CHEBI:30616"/>
        <dbReference type="ChEBI" id="CHEBI:33019"/>
        <dbReference type="ChEBI" id="CHEBI:57328"/>
        <dbReference type="ChEBI" id="CHEBI:61723"/>
        <dbReference type="EC" id="2.7.7.3"/>
    </reaction>
</comment>
<comment type="cofactor">
    <cofactor evidence="1">
        <name>Mg(2+)</name>
        <dbReference type="ChEBI" id="CHEBI:18420"/>
    </cofactor>
</comment>
<comment type="pathway">
    <text evidence="1">Cofactor biosynthesis; coenzyme A biosynthesis; CoA from (R)-pantothenate: step 4/5.</text>
</comment>
<comment type="subunit">
    <text evidence="1">Homohexamer.</text>
</comment>
<comment type="subcellular location">
    <subcellularLocation>
        <location evidence="1">Cytoplasm</location>
    </subcellularLocation>
</comment>
<comment type="similarity">
    <text evidence="1">Belongs to the bacterial CoaD family.</text>
</comment>
<evidence type="ECO:0000255" key="1">
    <source>
        <dbReference type="HAMAP-Rule" id="MF_00151"/>
    </source>
</evidence>